<dbReference type="EMBL" id="D86934">
    <property type="protein sequence ID" value="BAA82204.1"/>
    <property type="molecule type" value="Genomic_DNA"/>
</dbReference>
<dbReference type="EMBL" id="BA000018">
    <property type="protein sequence ID" value="BAB41267.1"/>
    <property type="molecule type" value="Genomic_DNA"/>
</dbReference>
<dbReference type="EMBL" id="BA000018">
    <property type="protein sequence ID" value="BAB42002.1"/>
    <property type="molecule type" value="Genomic_DNA"/>
</dbReference>
<dbReference type="EMBL" id="BA000018">
    <property type="protein sequence ID" value="BAB42747.1"/>
    <property type="molecule type" value="Genomic_DNA"/>
</dbReference>
<dbReference type="EMBL" id="BA000018">
    <property type="protein sequence ID" value="BAB43236.1"/>
    <property type="molecule type" value="Genomic_DNA"/>
</dbReference>
<dbReference type="EMBL" id="BA000018">
    <property type="protein sequence ID" value="BAB43690.1"/>
    <property type="molecule type" value="Genomic_DNA"/>
</dbReference>
<dbReference type="SMR" id="P0A0D1"/>
<dbReference type="EnsemblBacteria" id="BAB41267">
    <property type="protein sequence ID" value="BAB41267"/>
    <property type="gene ID" value="BAB41267"/>
</dbReference>
<dbReference type="EnsemblBacteria" id="BAB42002">
    <property type="protein sequence ID" value="BAB42002"/>
    <property type="gene ID" value="BAB42002"/>
</dbReference>
<dbReference type="EnsemblBacteria" id="BAB42747">
    <property type="protein sequence ID" value="BAB42747"/>
    <property type="gene ID" value="BAB42747"/>
</dbReference>
<dbReference type="EnsemblBacteria" id="BAB43236">
    <property type="protein sequence ID" value="BAB43236"/>
    <property type="gene ID" value="BAB43236"/>
</dbReference>
<dbReference type="EnsemblBacteria" id="BAB43690">
    <property type="protein sequence ID" value="BAB43690"/>
    <property type="gene ID" value="BAB43690"/>
</dbReference>
<dbReference type="KEGG" id="sau:SA0049"/>
<dbReference type="KEGG" id="sau:SA0765"/>
<dbReference type="KEGG" id="sau:SA1481"/>
<dbReference type="KEGG" id="sau:SA1952"/>
<dbReference type="KEGG" id="sau:SA2385"/>
<dbReference type="HOGENOM" id="CLU_071584_0_1_9"/>
<dbReference type="GO" id="GO:0070566">
    <property type="term" value="F:adenylyltransferase activity"/>
    <property type="evidence" value="ECO:0007669"/>
    <property type="project" value="InterPro"/>
</dbReference>
<dbReference type="GO" id="GO:0005524">
    <property type="term" value="F:ATP binding"/>
    <property type="evidence" value="ECO:0007669"/>
    <property type="project" value="UniProtKB-KW"/>
</dbReference>
<dbReference type="GO" id="GO:0046677">
    <property type="term" value="P:response to antibiotic"/>
    <property type="evidence" value="ECO:0007669"/>
    <property type="project" value="UniProtKB-KW"/>
</dbReference>
<dbReference type="CDD" id="cd05403">
    <property type="entry name" value="NT_KNTase_like"/>
    <property type="match status" value="1"/>
</dbReference>
<dbReference type="Gene3D" id="3.30.460.10">
    <property type="entry name" value="Beta Polymerase, domain 2"/>
    <property type="match status" value="1"/>
</dbReference>
<dbReference type="InterPro" id="IPR024172">
    <property type="entry name" value="AadA/Aad9"/>
</dbReference>
<dbReference type="InterPro" id="IPR025184">
    <property type="entry name" value="AadA_C"/>
</dbReference>
<dbReference type="InterPro" id="IPR043519">
    <property type="entry name" value="NT_sf"/>
</dbReference>
<dbReference type="InterPro" id="IPR002934">
    <property type="entry name" value="Polymerase_NTP_transf_dom"/>
</dbReference>
<dbReference type="NCBIfam" id="NF012212">
    <property type="entry name" value="ANT_9"/>
    <property type="match status" value="1"/>
</dbReference>
<dbReference type="NCBIfam" id="NF010309">
    <property type="entry name" value="PRK13746.1"/>
    <property type="match status" value="1"/>
</dbReference>
<dbReference type="Pfam" id="PF13427">
    <property type="entry name" value="AadA_C"/>
    <property type="match status" value="1"/>
</dbReference>
<dbReference type="Pfam" id="PF01909">
    <property type="entry name" value="NTP_transf_2"/>
    <property type="match status" value="1"/>
</dbReference>
<dbReference type="PIRSF" id="PIRSF000819">
    <property type="entry name" value="Streptomycin_3-adenylyltransf"/>
    <property type="match status" value="1"/>
</dbReference>
<dbReference type="SUPFAM" id="SSF81301">
    <property type="entry name" value="Nucleotidyltransferase"/>
    <property type="match status" value="1"/>
</dbReference>
<comment type="function">
    <text evidence="1">Mediates bacterial resistance to the antibiotic spectinomycin but not streptomycin.</text>
</comment>
<comment type="catalytic activity">
    <reaction evidence="1">
        <text>spectinomycin + ATP = 9-O-adenylylspectinomycin + diphosphate</text>
        <dbReference type="Rhea" id="RHEA:63228"/>
        <dbReference type="ChEBI" id="CHEBI:30616"/>
        <dbReference type="ChEBI" id="CHEBI:33019"/>
        <dbReference type="ChEBI" id="CHEBI:146260"/>
        <dbReference type="ChEBI" id="CHEBI:146261"/>
    </reaction>
</comment>
<accession>P0A0D1</accession>
<accession>P04827</accession>
<evidence type="ECO:0000250" key="1">
    <source>
        <dbReference type="UniProtKB" id="P0A0D2"/>
    </source>
</evidence>
<feature type="chain" id="PRO_0000068585" description="Spectinomycin 9-adenylyltransferase">
    <location>
        <begin position="1"/>
        <end position="260"/>
    </location>
</feature>
<organism>
    <name type="scientific">Staphylococcus aureus (strain N315)</name>
    <dbReference type="NCBI Taxonomy" id="158879"/>
    <lineage>
        <taxon>Bacteria</taxon>
        <taxon>Bacillati</taxon>
        <taxon>Bacillota</taxon>
        <taxon>Bacilli</taxon>
        <taxon>Bacillales</taxon>
        <taxon>Staphylococcaceae</taxon>
        <taxon>Staphylococcus</taxon>
    </lineage>
</organism>
<proteinExistence type="evidence at protein level"/>
<reference key="1">
    <citation type="journal article" date="1999" name="Antimicrob. Agents Chemother.">
        <title>Cloning and nucleotide sequence determination of the entire mec DNA of pre-methicillin-resistant Staphylococcus aureus N315.</title>
        <authorList>
            <person name="Ito T."/>
            <person name="Katayama Y."/>
            <person name="Hiramatsu K."/>
        </authorList>
    </citation>
    <scope>NUCLEOTIDE SEQUENCE [GENOMIC DNA]</scope>
</reference>
<reference key="2">
    <citation type="journal article" date="2001" name="Lancet">
        <title>Whole genome sequencing of meticillin-resistant Staphylococcus aureus.</title>
        <authorList>
            <person name="Kuroda M."/>
            <person name="Ohta T."/>
            <person name="Uchiyama I."/>
            <person name="Baba T."/>
            <person name="Yuzawa H."/>
            <person name="Kobayashi I."/>
            <person name="Cui L."/>
            <person name="Oguchi A."/>
            <person name="Aoki K."/>
            <person name="Nagai Y."/>
            <person name="Lian J.-Q."/>
            <person name="Ito T."/>
            <person name="Kanamori M."/>
            <person name="Matsumaru H."/>
            <person name="Maruyama A."/>
            <person name="Murakami H."/>
            <person name="Hosoyama A."/>
            <person name="Mizutani-Ui Y."/>
            <person name="Takahashi N.K."/>
            <person name="Sawano T."/>
            <person name="Inoue R."/>
            <person name="Kaito C."/>
            <person name="Sekimizu K."/>
            <person name="Hirakawa H."/>
            <person name="Kuhara S."/>
            <person name="Goto S."/>
            <person name="Yabuzaki J."/>
            <person name="Kanehisa M."/>
            <person name="Yamashita A."/>
            <person name="Oshima K."/>
            <person name="Furuya K."/>
            <person name="Yoshino C."/>
            <person name="Shiba T."/>
            <person name="Hattori M."/>
            <person name="Ogasawara N."/>
            <person name="Hayashi H."/>
            <person name="Hiramatsu K."/>
        </authorList>
    </citation>
    <scope>NUCLEOTIDE SEQUENCE [LARGE SCALE GENOMIC DNA]</scope>
    <source>
        <strain>N315</strain>
    </source>
</reference>
<reference key="3">
    <citation type="submission" date="2007-10" db="UniProtKB">
        <title>Shotgun proteomic analysis of total and membrane protein extracts of S. aureus strain N315.</title>
        <authorList>
            <person name="Vaezzadeh A.R."/>
            <person name="Deshusses J."/>
            <person name="Lescuyer P."/>
            <person name="Hochstrasser D.F."/>
        </authorList>
    </citation>
    <scope>IDENTIFICATION BY MASS SPECTROMETRY [LARGE SCALE ANALYSIS]</scope>
    <source>
        <strain>N315</strain>
    </source>
</reference>
<name>S9AD_STAAN</name>
<keyword id="KW-0046">Antibiotic resistance</keyword>
<keyword id="KW-0067">ATP-binding</keyword>
<keyword id="KW-0547">Nucleotide-binding</keyword>
<keyword id="KW-0548">Nucleotidyltransferase</keyword>
<keyword id="KW-0808">Transferase</keyword>
<keyword id="KW-0814">Transposable element</keyword>
<protein>
    <recommendedName>
        <fullName>Spectinomycin 9-adenylyltransferase</fullName>
    </recommendedName>
    <alternativeName>
        <fullName>AAD(9)</fullName>
    </alternativeName>
</protein>
<gene>
    <name type="primary">ant1</name>
    <name type="synonym">spc1</name>
    <name type="ordered locus">SA0049</name>
</gene>
<gene>
    <name type="primary">ant2</name>
    <name type="synonym">spc2</name>
    <name type="ordered locus">SA1481</name>
</gene>
<gene>
    <name type="primary">ant3</name>
    <name type="synonym">spc3</name>
    <name type="ordered locus">SA0765</name>
</gene>
<gene>
    <name type="primary">ant4</name>
    <name type="synonym">spc4</name>
    <name type="ordered locus">SA1952</name>
</gene>
<gene>
    <name type="primary">ant5</name>
    <name type="synonym">spc5</name>
    <name type="ordered locus">SA2385</name>
</gene>
<sequence>MSNLINGKIPNQAIQTLKIVKDLFGSSIVGVYLFGSAVNGGLRINSDVDVLVVVNHSLPQLTRKKLTERLMTISGKIGNTDSVRPLEVTVINRSEVVPWQYPPKREFIYGEWLRGEFENGQIQEPSYDPDLAIVLAQARKNSISLFGPDSSSILVSVPLTDIRRAIKDSLPELIEGIKGDERNVILTLARMWQTVTTGEITSKDVAAEWAIPLLPKEHVTLLDIARKGYRGECDDKWEGLYSKVKALVKYMKNSIETSLN</sequence>